<reference key="1">
    <citation type="journal article" date="2008" name="J. Bacteriol.">
        <title>Genome sequence of the chemolithoautotrophic bacterium Oligotropha carboxidovorans OM5T.</title>
        <authorList>
            <person name="Paul D."/>
            <person name="Bridges S."/>
            <person name="Burgess S.C."/>
            <person name="Dandass Y."/>
            <person name="Lawrence M.L."/>
        </authorList>
    </citation>
    <scope>NUCLEOTIDE SEQUENCE [LARGE SCALE GENOMIC DNA]</scope>
    <source>
        <strain>ATCC 49405 / DSM 1227 / KCTC 32145 / OM5</strain>
    </source>
</reference>
<reference key="2">
    <citation type="journal article" date="2011" name="J. Bacteriol.">
        <title>Complete genome sequences of the chemolithoautotrophic Oligotropha carboxidovorans strains OM4 and OM5.</title>
        <authorList>
            <person name="Volland S."/>
            <person name="Rachinger M."/>
            <person name="Strittmatter A."/>
            <person name="Daniel R."/>
            <person name="Gottschalk G."/>
            <person name="Meyer O."/>
        </authorList>
    </citation>
    <scope>NUCLEOTIDE SEQUENCE [LARGE SCALE GENOMIC DNA]</scope>
    <source>
        <strain>ATCC 49405 / DSM 1227 / KCTC 32145 / OM5</strain>
    </source>
</reference>
<name>SYS_AFIC5</name>
<evidence type="ECO:0000255" key="1">
    <source>
        <dbReference type="HAMAP-Rule" id="MF_00176"/>
    </source>
</evidence>
<comment type="function">
    <text evidence="1">Catalyzes the attachment of serine to tRNA(Ser). Is also able to aminoacylate tRNA(Sec) with serine, to form the misacylated tRNA L-seryl-tRNA(Sec), which will be further converted into selenocysteinyl-tRNA(Sec).</text>
</comment>
<comment type="catalytic activity">
    <reaction evidence="1">
        <text>tRNA(Ser) + L-serine + ATP = L-seryl-tRNA(Ser) + AMP + diphosphate + H(+)</text>
        <dbReference type="Rhea" id="RHEA:12292"/>
        <dbReference type="Rhea" id="RHEA-COMP:9669"/>
        <dbReference type="Rhea" id="RHEA-COMP:9703"/>
        <dbReference type="ChEBI" id="CHEBI:15378"/>
        <dbReference type="ChEBI" id="CHEBI:30616"/>
        <dbReference type="ChEBI" id="CHEBI:33019"/>
        <dbReference type="ChEBI" id="CHEBI:33384"/>
        <dbReference type="ChEBI" id="CHEBI:78442"/>
        <dbReference type="ChEBI" id="CHEBI:78533"/>
        <dbReference type="ChEBI" id="CHEBI:456215"/>
        <dbReference type="EC" id="6.1.1.11"/>
    </reaction>
</comment>
<comment type="catalytic activity">
    <reaction evidence="1">
        <text>tRNA(Sec) + L-serine + ATP = L-seryl-tRNA(Sec) + AMP + diphosphate + H(+)</text>
        <dbReference type="Rhea" id="RHEA:42580"/>
        <dbReference type="Rhea" id="RHEA-COMP:9742"/>
        <dbReference type="Rhea" id="RHEA-COMP:10128"/>
        <dbReference type="ChEBI" id="CHEBI:15378"/>
        <dbReference type="ChEBI" id="CHEBI:30616"/>
        <dbReference type="ChEBI" id="CHEBI:33019"/>
        <dbReference type="ChEBI" id="CHEBI:33384"/>
        <dbReference type="ChEBI" id="CHEBI:78442"/>
        <dbReference type="ChEBI" id="CHEBI:78533"/>
        <dbReference type="ChEBI" id="CHEBI:456215"/>
        <dbReference type="EC" id="6.1.1.11"/>
    </reaction>
</comment>
<comment type="pathway">
    <text evidence="1">Aminoacyl-tRNA biosynthesis; selenocysteinyl-tRNA(Sec) biosynthesis; L-seryl-tRNA(Sec) from L-serine and tRNA(Sec): step 1/1.</text>
</comment>
<comment type="subunit">
    <text evidence="1">Homodimer. The tRNA molecule binds across the dimer.</text>
</comment>
<comment type="subcellular location">
    <subcellularLocation>
        <location evidence="1">Cytoplasm</location>
    </subcellularLocation>
</comment>
<comment type="domain">
    <text evidence="1">Consists of two distinct domains, a catalytic core and a N-terminal extension that is involved in tRNA binding.</text>
</comment>
<comment type="similarity">
    <text evidence="1">Belongs to the class-II aminoacyl-tRNA synthetase family. Type-1 seryl-tRNA synthetase subfamily.</text>
</comment>
<gene>
    <name evidence="1" type="primary">serS</name>
    <name type="ordered locus">OCAR_6264</name>
    <name type="ordered locus">OCA5_c17680</name>
</gene>
<dbReference type="EC" id="6.1.1.11" evidence="1"/>
<dbReference type="EMBL" id="CP001196">
    <property type="protein sequence ID" value="ACI93377.1"/>
    <property type="molecule type" value="Genomic_DNA"/>
</dbReference>
<dbReference type="EMBL" id="CP002826">
    <property type="protein sequence ID" value="AEI06482.1"/>
    <property type="molecule type" value="Genomic_DNA"/>
</dbReference>
<dbReference type="RefSeq" id="WP_012563403.1">
    <property type="nucleotide sequence ID" value="NC_015684.1"/>
</dbReference>
<dbReference type="SMR" id="B6JFP3"/>
<dbReference type="STRING" id="504832.OCA5_c17680"/>
<dbReference type="KEGG" id="oca:OCAR_6264"/>
<dbReference type="KEGG" id="ocg:OCA5_c17680"/>
<dbReference type="PATRIC" id="fig|504832.7.peg.1892"/>
<dbReference type="eggNOG" id="COG0172">
    <property type="taxonomic scope" value="Bacteria"/>
</dbReference>
<dbReference type="HOGENOM" id="CLU_023797_1_1_5"/>
<dbReference type="OrthoDB" id="9804647at2"/>
<dbReference type="UniPathway" id="UPA00906">
    <property type="reaction ID" value="UER00895"/>
</dbReference>
<dbReference type="Proteomes" id="UP000007730">
    <property type="component" value="Chromosome"/>
</dbReference>
<dbReference type="GO" id="GO:0005737">
    <property type="term" value="C:cytoplasm"/>
    <property type="evidence" value="ECO:0007669"/>
    <property type="project" value="UniProtKB-SubCell"/>
</dbReference>
<dbReference type="GO" id="GO:0005524">
    <property type="term" value="F:ATP binding"/>
    <property type="evidence" value="ECO:0007669"/>
    <property type="project" value="UniProtKB-UniRule"/>
</dbReference>
<dbReference type="GO" id="GO:0004828">
    <property type="term" value="F:serine-tRNA ligase activity"/>
    <property type="evidence" value="ECO:0007669"/>
    <property type="project" value="UniProtKB-UniRule"/>
</dbReference>
<dbReference type="GO" id="GO:0016260">
    <property type="term" value="P:selenocysteine biosynthetic process"/>
    <property type="evidence" value="ECO:0007669"/>
    <property type="project" value="UniProtKB-UniRule"/>
</dbReference>
<dbReference type="GO" id="GO:0006434">
    <property type="term" value="P:seryl-tRNA aminoacylation"/>
    <property type="evidence" value="ECO:0007669"/>
    <property type="project" value="UniProtKB-UniRule"/>
</dbReference>
<dbReference type="CDD" id="cd00770">
    <property type="entry name" value="SerRS_core"/>
    <property type="match status" value="1"/>
</dbReference>
<dbReference type="Gene3D" id="3.30.930.10">
    <property type="entry name" value="Bira Bifunctional Protein, Domain 2"/>
    <property type="match status" value="1"/>
</dbReference>
<dbReference type="Gene3D" id="1.10.287.40">
    <property type="entry name" value="Serine-tRNA synthetase, tRNA binding domain"/>
    <property type="match status" value="1"/>
</dbReference>
<dbReference type="HAMAP" id="MF_00176">
    <property type="entry name" value="Ser_tRNA_synth_type1"/>
    <property type="match status" value="1"/>
</dbReference>
<dbReference type="InterPro" id="IPR002314">
    <property type="entry name" value="aa-tRNA-synt_IIb"/>
</dbReference>
<dbReference type="InterPro" id="IPR006195">
    <property type="entry name" value="aa-tRNA-synth_II"/>
</dbReference>
<dbReference type="InterPro" id="IPR045864">
    <property type="entry name" value="aa-tRNA-synth_II/BPL/LPL"/>
</dbReference>
<dbReference type="InterPro" id="IPR002317">
    <property type="entry name" value="Ser-tRNA-ligase_type_1"/>
</dbReference>
<dbReference type="InterPro" id="IPR015866">
    <property type="entry name" value="Ser-tRNA-synth_1_N"/>
</dbReference>
<dbReference type="InterPro" id="IPR042103">
    <property type="entry name" value="SerRS_1_N_sf"/>
</dbReference>
<dbReference type="InterPro" id="IPR033729">
    <property type="entry name" value="SerRS_core"/>
</dbReference>
<dbReference type="InterPro" id="IPR010978">
    <property type="entry name" value="tRNA-bd_arm"/>
</dbReference>
<dbReference type="NCBIfam" id="TIGR00414">
    <property type="entry name" value="serS"/>
    <property type="match status" value="1"/>
</dbReference>
<dbReference type="PANTHER" id="PTHR43697:SF1">
    <property type="entry name" value="SERINE--TRNA LIGASE"/>
    <property type="match status" value="1"/>
</dbReference>
<dbReference type="PANTHER" id="PTHR43697">
    <property type="entry name" value="SERYL-TRNA SYNTHETASE"/>
    <property type="match status" value="1"/>
</dbReference>
<dbReference type="Pfam" id="PF02403">
    <property type="entry name" value="Seryl_tRNA_N"/>
    <property type="match status" value="1"/>
</dbReference>
<dbReference type="Pfam" id="PF00587">
    <property type="entry name" value="tRNA-synt_2b"/>
    <property type="match status" value="1"/>
</dbReference>
<dbReference type="PIRSF" id="PIRSF001529">
    <property type="entry name" value="Ser-tRNA-synth_IIa"/>
    <property type="match status" value="1"/>
</dbReference>
<dbReference type="PRINTS" id="PR00981">
    <property type="entry name" value="TRNASYNTHSER"/>
</dbReference>
<dbReference type="SUPFAM" id="SSF55681">
    <property type="entry name" value="Class II aaRS and biotin synthetases"/>
    <property type="match status" value="1"/>
</dbReference>
<dbReference type="SUPFAM" id="SSF46589">
    <property type="entry name" value="tRNA-binding arm"/>
    <property type="match status" value="1"/>
</dbReference>
<dbReference type="PROSITE" id="PS50862">
    <property type="entry name" value="AA_TRNA_LIGASE_II"/>
    <property type="match status" value="1"/>
</dbReference>
<keyword id="KW-0030">Aminoacyl-tRNA synthetase</keyword>
<keyword id="KW-0067">ATP-binding</keyword>
<keyword id="KW-0963">Cytoplasm</keyword>
<keyword id="KW-0436">Ligase</keyword>
<keyword id="KW-0547">Nucleotide-binding</keyword>
<keyword id="KW-0648">Protein biosynthesis</keyword>
<keyword id="KW-1185">Reference proteome</keyword>
<proteinExistence type="inferred from homology"/>
<protein>
    <recommendedName>
        <fullName evidence="1">Serine--tRNA ligase</fullName>
        <ecNumber evidence="1">6.1.1.11</ecNumber>
    </recommendedName>
    <alternativeName>
        <fullName evidence="1">Seryl-tRNA synthetase</fullName>
        <shortName evidence="1">SerRS</shortName>
    </alternativeName>
    <alternativeName>
        <fullName evidence="1">Seryl-tRNA(Ser/Sec) synthetase</fullName>
    </alternativeName>
</protein>
<feature type="chain" id="PRO_1000098103" description="Serine--tRNA ligase">
    <location>
        <begin position="1"/>
        <end position="439"/>
    </location>
</feature>
<feature type="binding site" evidence="1">
    <location>
        <begin position="237"/>
        <end position="239"/>
    </location>
    <ligand>
        <name>L-serine</name>
        <dbReference type="ChEBI" id="CHEBI:33384"/>
    </ligand>
</feature>
<feature type="binding site" evidence="1">
    <location>
        <begin position="268"/>
        <end position="270"/>
    </location>
    <ligand>
        <name>ATP</name>
        <dbReference type="ChEBI" id="CHEBI:30616"/>
    </ligand>
</feature>
<feature type="binding site" evidence="1">
    <location>
        <position position="291"/>
    </location>
    <ligand>
        <name>L-serine</name>
        <dbReference type="ChEBI" id="CHEBI:33384"/>
    </ligand>
</feature>
<feature type="binding site" evidence="1">
    <location>
        <begin position="362"/>
        <end position="365"/>
    </location>
    <ligand>
        <name>ATP</name>
        <dbReference type="ChEBI" id="CHEBI:30616"/>
    </ligand>
</feature>
<feature type="binding site" evidence="1">
    <location>
        <position position="397"/>
    </location>
    <ligand>
        <name>L-serine</name>
        <dbReference type="ChEBI" id="CHEBI:33384"/>
    </ligand>
</feature>
<organism>
    <name type="scientific">Afipia carboxidovorans (strain ATCC 49405 / DSM 1227 / KCTC 32145 / OM5)</name>
    <name type="common">Oligotropha carboxidovorans</name>
    <dbReference type="NCBI Taxonomy" id="504832"/>
    <lineage>
        <taxon>Bacteria</taxon>
        <taxon>Pseudomonadati</taxon>
        <taxon>Pseudomonadota</taxon>
        <taxon>Alphaproteobacteria</taxon>
        <taxon>Hyphomicrobiales</taxon>
        <taxon>Nitrobacteraceae</taxon>
        <taxon>Afipia</taxon>
    </lineage>
</organism>
<accession>B6JFP3</accession>
<accession>F8BSE1</accession>
<sequence length="439" mass="48659">MHDIRWIRDNPEAFDAALGRRGLEPQAAALIALDEKRRGAIAAFEQAQARRNAASKEIGEAKKAKENARADALMAEVGELKTKLPEMDAAAKRLEEDLRKELAQIPNLPLAEVPEGADEHGNVQHHVYGEPRSYAFKPKEHVALGEGLGFMDFERAAKLSGARFVVLKSGLARLERAIGQFFLDVHTGEHGYTEVNPPLLVRDDAMFGTAQLPKFREDQFAAGSLDAEGQGYWLIPTAEVPLTNLVRESILDEKELPMRLTALTPCFRAEAGAAGRDTRGMIRQHQFTKVELVSITTPDESRNEHERMLSCAEEVLKRLGLHYRVMTLCTGDMGFASQKTYDIEVWMPGQISSQGEGGMYREISSCSVCGDFQARRMDARYRGPDNKPHFVHTLNGSGTAVGRALIAVMETYQQEDGSIAVPDVLQPYMGGLKVIERDR</sequence>